<accession>B2SRE3</accession>
<sequence length="127" mass="14317">MRHQKSGRKFNRTSAHREAMFRNMAASLFKHELIKTTLPKAKELRRVAEPLITIGKVDGVANRRLAFARLRDKEAVGKLFVELGPRYATRPGGYLRILKAGFRAGDNAPMAYVELVDRPVVAEEVAE</sequence>
<gene>
    <name evidence="1" type="primary">rplQ</name>
    <name type="ordered locus">PXO_04495</name>
</gene>
<name>RL17_XANOP</name>
<feature type="chain" id="PRO_1000144507" description="Large ribosomal subunit protein bL17">
    <location>
        <begin position="1"/>
        <end position="127"/>
    </location>
</feature>
<reference key="1">
    <citation type="journal article" date="2008" name="BMC Genomics">
        <title>Genome sequence and rapid evolution of the rice pathogen Xanthomonas oryzae pv. oryzae PXO99A.</title>
        <authorList>
            <person name="Salzberg S.L."/>
            <person name="Sommer D.D."/>
            <person name="Schatz M.C."/>
            <person name="Phillippy A.M."/>
            <person name="Rabinowicz P.D."/>
            <person name="Tsuge S."/>
            <person name="Furutani A."/>
            <person name="Ochiai H."/>
            <person name="Delcher A.L."/>
            <person name="Kelley D."/>
            <person name="Madupu R."/>
            <person name="Puiu D."/>
            <person name="Radune D."/>
            <person name="Shumway M."/>
            <person name="Trapnell C."/>
            <person name="Aparna G."/>
            <person name="Jha G."/>
            <person name="Pandey A."/>
            <person name="Patil P.B."/>
            <person name="Ishihara H."/>
            <person name="Meyer D.F."/>
            <person name="Szurek B."/>
            <person name="Verdier V."/>
            <person name="Koebnik R."/>
            <person name="Dow J.M."/>
            <person name="Ryan R.P."/>
            <person name="Hirata H."/>
            <person name="Tsuyumu S."/>
            <person name="Won Lee S."/>
            <person name="Seo Y.-S."/>
            <person name="Sriariyanum M."/>
            <person name="Ronald P.C."/>
            <person name="Sonti R.V."/>
            <person name="Van Sluys M.-A."/>
            <person name="Leach J.E."/>
            <person name="White F.F."/>
            <person name="Bogdanove A.J."/>
        </authorList>
    </citation>
    <scope>NUCLEOTIDE SEQUENCE [LARGE SCALE GENOMIC DNA]</scope>
    <source>
        <strain>PXO99A</strain>
    </source>
</reference>
<proteinExistence type="inferred from homology"/>
<dbReference type="EMBL" id="CP000967">
    <property type="protein sequence ID" value="ACD57912.1"/>
    <property type="molecule type" value="Genomic_DNA"/>
</dbReference>
<dbReference type="RefSeq" id="WP_003486665.1">
    <property type="nucleotide sequence ID" value="NC_010717.2"/>
</dbReference>
<dbReference type="SMR" id="B2SRE3"/>
<dbReference type="GeneID" id="97509361"/>
<dbReference type="KEGG" id="xop:PXO_04495"/>
<dbReference type="eggNOG" id="COG0203">
    <property type="taxonomic scope" value="Bacteria"/>
</dbReference>
<dbReference type="HOGENOM" id="CLU_074407_2_0_6"/>
<dbReference type="Proteomes" id="UP000001740">
    <property type="component" value="Chromosome"/>
</dbReference>
<dbReference type="GO" id="GO:0022625">
    <property type="term" value="C:cytosolic large ribosomal subunit"/>
    <property type="evidence" value="ECO:0007669"/>
    <property type="project" value="TreeGrafter"/>
</dbReference>
<dbReference type="GO" id="GO:0003735">
    <property type="term" value="F:structural constituent of ribosome"/>
    <property type="evidence" value="ECO:0007669"/>
    <property type="project" value="InterPro"/>
</dbReference>
<dbReference type="GO" id="GO:0006412">
    <property type="term" value="P:translation"/>
    <property type="evidence" value="ECO:0007669"/>
    <property type="project" value="UniProtKB-UniRule"/>
</dbReference>
<dbReference type="FunFam" id="3.90.1030.10:FF:000001">
    <property type="entry name" value="50S ribosomal protein L17"/>
    <property type="match status" value="1"/>
</dbReference>
<dbReference type="Gene3D" id="3.90.1030.10">
    <property type="entry name" value="Ribosomal protein L17"/>
    <property type="match status" value="1"/>
</dbReference>
<dbReference type="HAMAP" id="MF_01368">
    <property type="entry name" value="Ribosomal_bL17"/>
    <property type="match status" value="1"/>
</dbReference>
<dbReference type="InterPro" id="IPR000456">
    <property type="entry name" value="Ribosomal_bL17"/>
</dbReference>
<dbReference type="InterPro" id="IPR047859">
    <property type="entry name" value="Ribosomal_bL17_CS"/>
</dbReference>
<dbReference type="InterPro" id="IPR036373">
    <property type="entry name" value="Ribosomal_bL17_sf"/>
</dbReference>
<dbReference type="NCBIfam" id="TIGR00059">
    <property type="entry name" value="L17"/>
    <property type="match status" value="1"/>
</dbReference>
<dbReference type="PANTHER" id="PTHR14413:SF16">
    <property type="entry name" value="LARGE RIBOSOMAL SUBUNIT PROTEIN BL17M"/>
    <property type="match status" value="1"/>
</dbReference>
<dbReference type="PANTHER" id="PTHR14413">
    <property type="entry name" value="RIBOSOMAL PROTEIN L17"/>
    <property type="match status" value="1"/>
</dbReference>
<dbReference type="Pfam" id="PF01196">
    <property type="entry name" value="Ribosomal_L17"/>
    <property type="match status" value="1"/>
</dbReference>
<dbReference type="SUPFAM" id="SSF64263">
    <property type="entry name" value="Prokaryotic ribosomal protein L17"/>
    <property type="match status" value="1"/>
</dbReference>
<dbReference type="PROSITE" id="PS01167">
    <property type="entry name" value="RIBOSOMAL_L17"/>
    <property type="match status" value="1"/>
</dbReference>
<protein>
    <recommendedName>
        <fullName evidence="1">Large ribosomal subunit protein bL17</fullName>
    </recommendedName>
    <alternativeName>
        <fullName evidence="2">50S ribosomal protein L17</fullName>
    </alternativeName>
</protein>
<keyword id="KW-0687">Ribonucleoprotein</keyword>
<keyword id="KW-0689">Ribosomal protein</keyword>
<evidence type="ECO:0000255" key="1">
    <source>
        <dbReference type="HAMAP-Rule" id="MF_01368"/>
    </source>
</evidence>
<evidence type="ECO:0000305" key="2"/>
<comment type="subunit">
    <text evidence="1">Part of the 50S ribosomal subunit. Contacts protein L32.</text>
</comment>
<comment type="similarity">
    <text evidence="1">Belongs to the bacterial ribosomal protein bL17 family.</text>
</comment>
<organism>
    <name type="scientific">Xanthomonas oryzae pv. oryzae (strain PXO99A)</name>
    <dbReference type="NCBI Taxonomy" id="360094"/>
    <lineage>
        <taxon>Bacteria</taxon>
        <taxon>Pseudomonadati</taxon>
        <taxon>Pseudomonadota</taxon>
        <taxon>Gammaproteobacteria</taxon>
        <taxon>Lysobacterales</taxon>
        <taxon>Lysobacteraceae</taxon>
        <taxon>Xanthomonas</taxon>
    </lineage>
</organism>